<reference key="1">
    <citation type="submission" date="2006-06" db="EMBL/GenBank/DDBJ databases">
        <title>Complete sequence of chromosome of Mycobacterium sp. MCS.</title>
        <authorList>
            <consortium name="US DOE Joint Genome Institute"/>
            <person name="Copeland A."/>
            <person name="Lucas S."/>
            <person name="Lapidus A."/>
            <person name="Barry K."/>
            <person name="Detter J.C."/>
            <person name="Glavina del Rio T."/>
            <person name="Hammon N."/>
            <person name="Israni S."/>
            <person name="Dalin E."/>
            <person name="Tice H."/>
            <person name="Pitluck S."/>
            <person name="Martinez M."/>
            <person name="Schmutz J."/>
            <person name="Larimer F."/>
            <person name="Land M."/>
            <person name="Hauser L."/>
            <person name="Kyrpides N."/>
            <person name="Kim E."/>
            <person name="Miller C.D."/>
            <person name="Hughes J.E."/>
            <person name="Anderson A.J."/>
            <person name="Sims R.C."/>
            <person name="Richardson P."/>
        </authorList>
    </citation>
    <scope>NUCLEOTIDE SEQUENCE [LARGE SCALE GENOMIC DNA]</scope>
    <source>
        <strain>MCS</strain>
    </source>
</reference>
<evidence type="ECO:0000250" key="1"/>
<evidence type="ECO:0000255" key="2"/>
<evidence type="ECO:0000305" key="3"/>
<feature type="signal peptide" evidence="2">
    <location>
        <begin position="1"/>
        <end position="21"/>
    </location>
</feature>
<feature type="chain" id="PRO_0000261311" description="L-lysine N6-monooxygenase MbtG">
    <location>
        <begin position="22"/>
        <end position="430"/>
    </location>
</feature>
<name>MBTG_MYCSS</name>
<protein>
    <recommendedName>
        <fullName>L-lysine N6-monooxygenase MbtG</fullName>
        <ecNumber>1.14.13.59</ecNumber>
    </recommendedName>
    <alternativeName>
        <fullName>Lysine 6-N-hydroxylase</fullName>
    </alternativeName>
    <alternativeName>
        <fullName>Lysine N6-hydroxylase</fullName>
    </alternativeName>
    <alternativeName>
        <fullName>Lysine-N-oxygenase</fullName>
    </alternativeName>
    <alternativeName>
        <fullName>Mycobactin synthase protein G</fullName>
    </alternativeName>
</protein>
<proteinExistence type="inferred from homology"/>
<keyword id="KW-0274">FAD</keyword>
<keyword id="KW-0285">Flavoprotein</keyword>
<keyword id="KW-0503">Monooxygenase</keyword>
<keyword id="KW-0521">NADP</keyword>
<keyword id="KW-0560">Oxidoreductase</keyword>
<keyword id="KW-0732">Signal</keyword>
<accession>Q1B6B3</accession>
<sequence length="430" mass="46622">MTATLAVIGAGPKAVAVAAKAAELRNMGVDAPDVVVVERAGVGANWTAAGGWTDGQHRLGTSPEKDIGFPYRSSLVPRRNAELDDRMTRHSWQAYLVATSQFAEWIDRGRPAPNHHRWAAYLRWVADAIGMNVVHGEVERISIGGRGWELHTPESTVAADAVMITGPGQAERTLLPGHPRVMSIADFWRRTAGHELIVAERVAMIGGGETAASMLNELFRHRVSTITVISPQVTLFTRGEGFFENTLFSDPTGWTSLTLAERRDAMFRTDRGVFSARVQEALLADDRIRHLRGRVAHAVPRDGRIRLTLHTDRAGERVETVHGFDLVIDGQGADALWFLPLLGQDARDLLELGLGGPLTGELLQESIGHDLAVGGVTPKLFLPGLAGLNQGPGFPNLSCLGLMSDRILGADLGANAAMTNRRSIEHQPIR</sequence>
<organism>
    <name type="scientific">Mycobacterium sp. (strain MCS)</name>
    <dbReference type="NCBI Taxonomy" id="164756"/>
    <lineage>
        <taxon>Bacteria</taxon>
        <taxon>Bacillati</taxon>
        <taxon>Actinomycetota</taxon>
        <taxon>Actinomycetes</taxon>
        <taxon>Mycobacteriales</taxon>
        <taxon>Mycobacteriaceae</taxon>
        <taxon>Mycobacterium</taxon>
    </lineage>
</organism>
<dbReference type="EC" id="1.14.13.59"/>
<dbReference type="EMBL" id="CP000384">
    <property type="protein sequence ID" value="ABG09571.1"/>
    <property type="molecule type" value="Genomic_DNA"/>
</dbReference>
<dbReference type="SMR" id="Q1B6B3"/>
<dbReference type="KEGG" id="mmc:Mmcs_3464"/>
<dbReference type="HOGENOM" id="CLU_052650_0_0_11"/>
<dbReference type="BioCyc" id="MSP164756:G1G6O-3534-MONOMER"/>
<dbReference type="UniPathway" id="UPA00011"/>
<dbReference type="GO" id="GO:0047091">
    <property type="term" value="F:L-lysine 6-monooxygenase (NADPH) activity"/>
    <property type="evidence" value="ECO:0007669"/>
    <property type="project" value="UniProtKB-EC"/>
</dbReference>
<dbReference type="GO" id="GO:0009058">
    <property type="term" value="P:biosynthetic process"/>
    <property type="evidence" value="ECO:0007669"/>
    <property type="project" value="UniProtKB-ARBA"/>
</dbReference>
<dbReference type="Gene3D" id="3.50.50.60">
    <property type="entry name" value="FAD/NAD(P)-binding domain"/>
    <property type="match status" value="1"/>
</dbReference>
<dbReference type="InterPro" id="IPR036188">
    <property type="entry name" value="FAD/NAD-bd_sf"/>
</dbReference>
<dbReference type="InterPro" id="IPR025700">
    <property type="entry name" value="Lys/Orn_oxygenase"/>
</dbReference>
<dbReference type="Pfam" id="PF13434">
    <property type="entry name" value="Lys_Orn_oxgnase"/>
    <property type="match status" value="1"/>
</dbReference>
<dbReference type="PRINTS" id="PR00368">
    <property type="entry name" value="FADPNR"/>
</dbReference>
<dbReference type="SUPFAM" id="SSF51905">
    <property type="entry name" value="FAD/NAD(P)-binding domain"/>
    <property type="match status" value="2"/>
</dbReference>
<comment type="function">
    <text evidence="1">Flavoprotein monooxygenase required for N-hydroxylation of the two acylated lysine residues during mycobactin assembly, thus producing the hydroxamate groups necessary for iron sequestration. Is also able, but less efficiently, to hydroxylate L-lysine (non acylated) in vitro (By similarity).</text>
</comment>
<comment type="catalytic activity">
    <reaction>
        <text>L-lysine + NADPH + O2 = N(6)-hydroxy-L-lysine + NADP(+) + H2O</text>
        <dbReference type="Rhea" id="RHEA:23228"/>
        <dbReference type="ChEBI" id="CHEBI:15377"/>
        <dbReference type="ChEBI" id="CHEBI:15379"/>
        <dbReference type="ChEBI" id="CHEBI:32551"/>
        <dbReference type="ChEBI" id="CHEBI:57783"/>
        <dbReference type="ChEBI" id="CHEBI:57820"/>
        <dbReference type="ChEBI" id="CHEBI:58349"/>
        <dbReference type="EC" id="1.14.13.59"/>
    </reaction>
</comment>
<comment type="cofactor">
    <cofactor evidence="1">
        <name>FAD</name>
        <dbReference type="ChEBI" id="CHEBI:57692"/>
    </cofactor>
</comment>
<comment type="pathway">
    <text>Siderophore biosynthesis; mycobactin biosynthesis.</text>
</comment>
<comment type="similarity">
    <text evidence="3">Belongs to the lysine N(6)-hydroxylase/L-ornithine N(5)-oxygenase family.</text>
</comment>
<gene>
    <name type="primary">mbtG</name>
    <name type="ordered locus">Mmcs_3464</name>
</gene>